<sequence>MNWLTNVVRPKIRNILKRETPENLWIKCPDTGQLVFYKDVESNQFVIPGSNYHMRMSADARLRSIFDNETWYDVALPEVTADPLKFRDERKYVDRIKDARTKTGLHDSVKVGFGKLEGAGVVVAVQDFDFMGGSLGMAAGEAIVRGLELAVEKQCPFIVFAASGGARMQEGVLSLMQLPRTTVAVQMLREAGQPYIVVLTNPTTGGVTASYAMLGDVQIAEPGALIGFAGARVIEQTIREKLPNGFQRAEYLRDHGMVDMVVHRHDLRPTLARLCRLLTKAPEIDAAPEPSPAAEEPAEPMPAPEAAAPSAPPA</sequence>
<organism>
    <name type="scientific">Nitrobacter hamburgensis (strain DSM 10229 / NCIMB 13809 / X14)</name>
    <dbReference type="NCBI Taxonomy" id="323097"/>
    <lineage>
        <taxon>Bacteria</taxon>
        <taxon>Pseudomonadati</taxon>
        <taxon>Pseudomonadota</taxon>
        <taxon>Alphaproteobacteria</taxon>
        <taxon>Hyphomicrobiales</taxon>
        <taxon>Nitrobacteraceae</taxon>
        <taxon>Nitrobacter</taxon>
    </lineage>
</organism>
<proteinExistence type="inferred from homology"/>
<protein>
    <recommendedName>
        <fullName evidence="1">Acetyl-coenzyme A carboxylase carboxyl transferase subunit beta</fullName>
        <shortName evidence="1">ACCase subunit beta</shortName>
        <shortName evidence="1">Acetyl-CoA carboxylase carboxyltransferase subunit beta</shortName>
        <ecNumber evidence="1">2.1.3.15</ecNumber>
    </recommendedName>
</protein>
<keyword id="KW-0067">ATP-binding</keyword>
<keyword id="KW-0963">Cytoplasm</keyword>
<keyword id="KW-0275">Fatty acid biosynthesis</keyword>
<keyword id="KW-0276">Fatty acid metabolism</keyword>
<keyword id="KW-0444">Lipid biosynthesis</keyword>
<keyword id="KW-0443">Lipid metabolism</keyword>
<keyword id="KW-0547">Nucleotide-binding</keyword>
<keyword id="KW-1185">Reference proteome</keyword>
<keyword id="KW-0808">Transferase</keyword>
<comment type="function">
    <text evidence="1">Component of the acetyl coenzyme A carboxylase (ACC) complex. Biotin carboxylase (BC) catalyzes the carboxylation of biotin on its carrier protein (BCCP) and then the CO(2) group is transferred by the transcarboxylase to acetyl-CoA to form malonyl-CoA.</text>
</comment>
<comment type="catalytic activity">
    <reaction evidence="1">
        <text>N(6)-carboxybiotinyl-L-lysyl-[protein] + acetyl-CoA = N(6)-biotinyl-L-lysyl-[protein] + malonyl-CoA</text>
        <dbReference type="Rhea" id="RHEA:54728"/>
        <dbReference type="Rhea" id="RHEA-COMP:10505"/>
        <dbReference type="Rhea" id="RHEA-COMP:10506"/>
        <dbReference type="ChEBI" id="CHEBI:57288"/>
        <dbReference type="ChEBI" id="CHEBI:57384"/>
        <dbReference type="ChEBI" id="CHEBI:83144"/>
        <dbReference type="ChEBI" id="CHEBI:83145"/>
        <dbReference type="EC" id="2.1.3.15"/>
    </reaction>
</comment>
<comment type="pathway">
    <text evidence="1">Lipid metabolism; malonyl-CoA biosynthesis; malonyl-CoA from acetyl-CoA: step 1/1.</text>
</comment>
<comment type="subunit">
    <text evidence="1">Acetyl-CoA carboxylase is a heterohexamer composed of biotin carboxyl carrier protein (AccB), biotin carboxylase (AccC) and two subunits each of ACCase subunit alpha (AccA) and ACCase subunit beta (AccD).</text>
</comment>
<comment type="subcellular location">
    <subcellularLocation>
        <location evidence="1">Cytoplasm</location>
    </subcellularLocation>
</comment>
<comment type="similarity">
    <text evidence="1">Belongs to the AccD/PCCB family.</text>
</comment>
<accession>Q1QS35</accession>
<feature type="chain" id="PRO_0000389802" description="Acetyl-coenzyme A carboxylase carboxyl transferase subunit beta">
    <location>
        <begin position="1"/>
        <end position="314"/>
    </location>
</feature>
<feature type="domain" description="CoA carboxyltransferase N-terminal" evidence="2">
    <location>
        <begin position="24"/>
        <end position="293"/>
    </location>
</feature>
<feature type="region of interest" description="Disordered" evidence="3">
    <location>
        <begin position="283"/>
        <end position="314"/>
    </location>
</feature>
<feature type="compositionally biased region" description="Low complexity" evidence="3">
    <location>
        <begin position="284"/>
        <end position="295"/>
    </location>
</feature>
<feature type="compositionally biased region" description="Low complexity" evidence="3">
    <location>
        <begin position="304"/>
        <end position="314"/>
    </location>
</feature>
<gene>
    <name evidence="1" type="primary">accD</name>
    <name type="ordered locus">Nham_0061</name>
</gene>
<evidence type="ECO:0000255" key="1">
    <source>
        <dbReference type="HAMAP-Rule" id="MF_01395"/>
    </source>
</evidence>
<evidence type="ECO:0000255" key="2">
    <source>
        <dbReference type="PROSITE-ProRule" id="PRU01136"/>
    </source>
</evidence>
<evidence type="ECO:0000256" key="3">
    <source>
        <dbReference type="SAM" id="MobiDB-lite"/>
    </source>
</evidence>
<reference key="1">
    <citation type="submission" date="2006-03" db="EMBL/GenBank/DDBJ databases">
        <title>Complete sequence of chromosome of Nitrobacter hamburgensis X14.</title>
        <authorList>
            <consortium name="US DOE Joint Genome Institute"/>
            <person name="Copeland A."/>
            <person name="Lucas S."/>
            <person name="Lapidus A."/>
            <person name="Barry K."/>
            <person name="Detter J.C."/>
            <person name="Glavina del Rio T."/>
            <person name="Hammon N."/>
            <person name="Israni S."/>
            <person name="Dalin E."/>
            <person name="Tice H."/>
            <person name="Pitluck S."/>
            <person name="Chain P."/>
            <person name="Malfatti S."/>
            <person name="Shin M."/>
            <person name="Vergez L."/>
            <person name="Schmutz J."/>
            <person name="Larimer F."/>
            <person name="Land M."/>
            <person name="Hauser L."/>
            <person name="Kyrpides N."/>
            <person name="Ivanova N."/>
            <person name="Ward B."/>
            <person name="Arp D."/>
            <person name="Klotz M."/>
            <person name="Stein L."/>
            <person name="O'Mullan G."/>
            <person name="Starkenburg S."/>
            <person name="Sayavedra L."/>
            <person name="Poret-Peterson A.T."/>
            <person name="Gentry M.E."/>
            <person name="Bruce D."/>
            <person name="Richardson P."/>
        </authorList>
    </citation>
    <scope>NUCLEOTIDE SEQUENCE [LARGE SCALE GENOMIC DNA]</scope>
    <source>
        <strain>DSM 10229 / NCIMB 13809 / X14</strain>
    </source>
</reference>
<dbReference type="EC" id="2.1.3.15" evidence="1"/>
<dbReference type="EMBL" id="CP000319">
    <property type="protein sequence ID" value="ABE60962.1"/>
    <property type="molecule type" value="Genomic_DNA"/>
</dbReference>
<dbReference type="RefSeq" id="WP_011508669.1">
    <property type="nucleotide sequence ID" value="NC_007964.1"/>
</dbReference>
<dbReference type="SMR" id="Q1QS35"/>
<dbReference type="STRING" id="323097.Nham_0061"/>
<dbReference type="KEGG" id="nha:Nham_0061"/>
<dbReference type="eggNOG" id="COG0777">
    <property type="taxonomic scope" value="Bacteria"/>
</dbReference>
<dbReference type="HOGENOM" id="CLU_015486_1_0_5"/>
<dbReference type="OrthoDB" id="9772975at2"/>
<dbReference type="UniPathway" id="UPA00655">
    <property type="reaction ID" value="UER00711"/>
</dbReference>
<dbReference type="Proteomes" id="UP000001953">
    <property type="component" value="Chromosome"/>
</dbReference>
<dbReference type="GO" id="GO:0009329">
    <property type="term" value="C:acetate CoA-transferase complex"/>
    <property type="evidence" value="ECO:0007669"/>
    <property type="project" value="TreeGrafter"/>
</dbReference>
<dbReference type="GO" id="GO:0003989">
    <property type="term" value="F:acetyl-CoA carboxylase activity"/>
    <property type="evidence" value="ECO:0007669"/>
    <property type="project" value="InterPro"/>
</dbReference>
<dbReference type="GO" id="GO:0005524">
    <property type="term" value="F:ATP binding"/>
    <property type="evidence" value="ECO:0007669"/>
    <property type="project" value="UniProtKB-KW"/>
</dbReference>
<dbReference type="GO" id="GO:0016743">
    <property type="term" value="F:carboxyl- or carbamoyltransferase activity"/>
    <property type="evidence" value="ECO:0007669"/>
    <property type="project" value="UniProtKB-UniRule"/>
</dbReference>
<dbReference type="GO" id="GO:0006633">
    <property type="term" value="P:fatty acid biosynthetic process"/>
    <property type="evidence" value="ECO:0007669"/>
    <property type="project" value="UniProtKB-KW"/>
</dbReference>
<dbReference type="GO" id="GO:2001295">
    <property type="term" value="P:malonyl-CoA biosynthetic process"/>
    <property type="evidence" value="ECO:0007669"/>
    <property type="project" value="UniProtKB-UniRule"/>
</dbReference>
<dbReference type="Gene3D" id="3.90.226.10">
    <property type="entry name" value="2-enoyl-CoA Hydratase, Chain A, domain 1"/>
    <property type="match status" value="1"/>
</dbReference>
<dbReference type="HAMAP" id="MF_01395">
    <property type="entry name" value="AcetylCoA_CT_beta"/>
    <property type="match status" value="1"/>
</dbReference>
<dbReference type="InterPro" id="IPR034733">
    <property type="entry name" value="AcCoA_carboxyl_beta"/>
</dbReference>
<dbReference type="InterPro" id="IPR000438">
    <property type="entry name" value="Acetyl_CoA_COase_Trfase_b_su"/>
</dbReference>
<dbReference type="InterPro" id="IPR029045">
    <property type="entry name" value="ClpP/crotonase-like_dom_sf"/>
</dbReference>
<dbReference type="InterPro" id="IPR011762">
    <property type="entry name" value="COA_CT_N"/>
</dbReference>
<dbReference type="NCBIfam" id="TIGR00515">
    <property type="entry name" value="accD"/>
    <property type="match status" value="1"/>
</dbReference>
<dbReference type="PANTHER" id="PTHR42995">
    <property type="entry name" value="ACETYL-COENZYME A CARBOXYLASE CARBOXYL TRANSFERASE SUBUNIT BETA, CHLOROPLASTIC"/>
    <property type="match status" value="1"/>
</dbReference>
<dbReference type="PANTHER" id="PTHR42995:SF5">
    <property type="entry name" value="ACETYL-COENZYME A CARBOXYLASE CARBOXYL TRANSFERASE SUBUNIT BETA, CHLOROPLASTIC"/>
    <property type="match status" value="1"/>
</dbReference>
<dbReference type="Pfam" id="PF01039">
    <property type="entry name" value="Carboxyl_trans"/>
    <property type="match status" value="1"/>
</dbReference>
<dbReference type="PRINTS" id="PR01070">
    <property type="entry name" value="ACCCTRFRASEB"/>
</dbReference>
<dbReference type="SUPFAM" id="SSF52096">
    <property type="entry name" value="ClpP/crotonase"/>
    <property type="match status" value="1"/>
</dbReference>
<dbReference type="PROSITE" id="PS50980">
    <property type="entry name" value="COA_CT_NTER"/>
    <property type="match status" value="1"/>
</dbReference>
<name>ACCD_NITHX</name>